<feature type="chain" id="PRO_1000135003" description="Imidazole glycerol phosphate synthase subunit HisF">
    <location>
        <begin position="1"/>
        <end position="249"/>
    </location>
</feature>
<feature type="active site" evidence="1">
    <location>
        <position position="11"/>
    </location>
</feature>
<feature type="active site" evidence="1">
    <location>
        <position position="130"/>
    </location>
</feature>
<name>HIS6_EXIS2</name>
<sequence>MLMKRIIPCLDVKEGRVVKGVKFQNLRDLGDPVAVAKYYYEQGADELVLLDISATQEGRDTMLDIVERVAEVIYMPFTVGGGIKTLEDAKRLIRAGADKVSLNSSALQNPQLIQDISRLFGVQATVVAIDAKRTGDSWGVFSHGGTQAVGRDAIEWAKEAVSLGAGELLVTSMDADGTKDGYDLELIQRLREVVNVPLIASGGVGTLEHLAEGLEAGADAALAASIFHEATYTMPETKDYLKARGVNVR</sequence>
<proteinExistence type="inferred from homology"/>
<gene>
    <name evidence="1" type="primary">hisF</name>
    <name type="ordered locus">Exig_2361</name>
</gene>
<dbReference type="EC" id="4.3.2.10" evidence="1"/>
<dbReference type="EMBL" id="CP001022">
    <property type="protein sequence ID" value="ACB61811.1"/>
    <property type="molecule type" value="Genomic_DNA"/>
</dbReference>
<dbReference type="RefSeq" id="WP_012371227.1">
    <property type="nucleotide sequence ID" value="NC_010556.1"/>
</dbReference>
<dbReference type="SMR" id="B1YL09"/>
<dbReference type="STRING" id="262543.Exig_2361"/>
<dbReference type="KEGG" id="esi:Exig_2361"/>
<dbReference type="eggNOG" id="COG0107">
    <property type="taxonomic scope" value="Bacteria"/>
</dbReference>
<dbReference type="HOGENOM" id="CLU_048577_4_0_9"/>
<dbReference type="OrthoDB" id="9781903at2"/>
<dbReference type="UniPathway" id="UPA00031">
    <property type="reaction ID" value="UER00010"/>
</dbReference>
<dbReference type="Proteomes" id="UP000001681">
    <property type="component" value="Chromosome"/>
</dbReference>
<dbReference type="GO" id="GO:0005737">
    <property type="term" value="C:cytoplasm"/>
    <property type="evidence" value="ECO:0007669"/>
    <property type="project" value="UniProtKB-SubCell"/>
</dbReference>
<dbReference type="GO" id="GO:0000107">
    <property type="term" value="F:imidazoleglycerol-phosphate synthase activity"/>
    <property type="evidence" value="ECO:0007669"/>
    <property type="project" value="UniProtKB-UniRule"/>
</dbReference>
<dbReference type="GO" id="GO:0016829">
    <property type="term" value="F:lyase activity"/>
    <property type="evidence" value="ECO:0007669"/>
    <property type="project" value="UniProtKB-KW"/>
</dbReference>
<dbReference type="GO" id="GO:0000105">
    <property type="term" value="P:L-histidine biosynthetic process"/>
    <property type="evidence" value="ECO:0007669"/>
    <property type="project" value="UniProtKB-UniRule"/>
</dbReference>
<dbReference type="CDD" id="cd04731">
    <property type="entry name" value="HisF"/>
    <property type="match status" value="1"/>
</dbReference>
<dbReference type="FunFam" id="3.20.20.70:FF:000006">
    <property type="entry name" value="Imidazole glycerol phosphate synthase subunit HisF"/>
    <property type="match status" value="1"/>
</dbReference>
<dbReference type="Gene3D" id="3.20.20.70">
    <property type="entry name" value="Aldolase class I"/>
    <property type="match status" value="1"/>
</dbReference>
<dbReference type="HAMAP" id="MF_01013">
    <property type="entry name" value="HisF"/>
    <property type="match status" value="1"/>
</dbReference>
<dbReference type="InterPro" id="IPR013785">
    <property type="entry name" value="Aldolase_TIM"/>
</dbReference>
<dbReference type="InterPro" id="IPR006062">
    <property type="entry name" value="His_biosynth"/>
</dbReference>
<dbReference type="InterPro" id="IPR004651">
    <property type="entry name" value="HisF"/>
</dbReference>
<dbReference type="InterPro" id="IPR050064">
    <property type="entry name" value="IGPS_HisA/HisF"/>
</dbReference>
<dbReference type="InterPro" id="IPR011060">
    <property type="entry name" value="RibuloseP-bd_barrel"/>
</dbReference>
<dbReference type="NCBIfam" id="TIGR00735">
    <property type="entry name" value="hisF"/>
    <property type="match status" value="1"/>
</dbReference>
<dbReference type="PANTHER" id="PTHR21235:SF2">
    <property type="entry name" value="IMIDAZOLE GLYCEROL PHOSPHATE SYNTHASE HISHF"/>
    <property type="match status" value="1"/>
</dbReference>
<dbReference type="PANTHER" id="PTHR21235">
    <property type="entry name" value="IMIDAZOLE GLYCEROL PHOSPHATE SYNTHASE SUBUNIT HISF/H IGP SYNTHASE SUBUNIT HISF/H"/>
    <property type="match status" value="1"/>
</dbReference>
<dbReference type="Pfam" id="PF00977">
    <property type="entry name" value="His_biosynth"/>
    <property type="match status" value="1"/>
</dbReference>
<dbReference type="SUPFAM" id="SSF51366">
    <property type="entry name" value="Ribulose-phoshate binding barrel"/>
    <property type="match status" value="1"/>
</dbReference>
<accession>B1YL09</accession>
<keyword id="KW-0028">Amino-acid biosynthesis</keyword>
<keyword id="KW-0963">Cytoplasm</keyword>
<keyword id="KW-0368">Histidine biosynthesis</keyword>
<keyword id="KW-0456">Lyase</keyword>
<keyword id="KW-1185">Reference proteome</keyword>
<comment type="function">
    <text evidence="1">IGPS catalyzes the conversion of PRFAR and glutamine to IGP, AICAR and glutamate. The HisF subunit catalyzes the cyclization activity that produces IGP and AICAR from PRFAR using the ammonia provided by the HisH subunit.</text>
</comment>
<comment type="catalytic activity">
    <reaction evidence="1">
        <text>5-[(5-phospho-1-deoxy-D-ribulos-1-ylimino)methylamino]-1-(5-phospho-beta-D-ribosyl)imidazole-4-carboxamide + L-glutamine = D-erythro-1-(imidazol-4-yl)glycerol 3-phosphate + 5-amino-1-(5-phospho-beta-D-ribosyl)imidazole-4-carboxamide + L-glutamate + H(+)</text>
        <dbReference type="Rhea" id="RHEA:24793"/>
        <dbReference type="ChEBI" id="CHEBI:15378"/>
        <dbReference type="ChEBI" id="CHEBI:29985"/>
        <dbReference type="ChEBI" id="CHEBI:58278"/>
        <dbReference type="ChEBI" id="CHEBI:58359"/>
        <dbReference type="ChEBI" id="CHEBI:58475"/>
        <dbReference type="ChEBI" id="CHEBI:58525"/>
        <dbReference type="EC" id="4.3.2.10"/>
    </reaction>
</comment>
<comment type="pathway">
    <text evidence="1">Amino-acid biosynthesis; L-histidine biosynthesis; L-histidine from 5-phospho-alpha-D-ribose 1-diphosphate: step 5/9.</text>
</comment>
<comment type="subunit">
    <text evidence="1">Heterodimer of HisH and HisF.</text>
</comment>
<comment type="subcellular location">
    <subcellularLocation>
        <location evidence="1">Cytoplasm</location>
    </subcellularLocation>
</comment>
<comment type="similarity">
    <text evidence="1">Belongs to the HisA/HisF family.</text>
</comment>
<reference key="1">
    <citation type="submission" date="2008-04" db="EMBL/GenBank/DDBJ databases">
        <title>Complete sequence of chromosome of Exiguobacterium sibiricum 255-15.</title>
        <authorList>
            <consortium name="US DOE Joint Genome Institute"/>
            <person name="Copeland A."/>
            <person name="Lucas S."/>
            <person name="Lapidus A."/>
            <person name="Glavina del Rio T."/>
            <person name="Dalin E."/>
            <person name="Tice H."/>
            <person name="Bruce D."/>
            <person name="Goodwin L."/>
            <person name="Pitluck S."/>
            <person name="Kiss H."/>
            <person name="Chertkov O."/>
            <person name="Monk C."/>
            <person name="Brettin T."/>
            <person name="Detter J.C."/>
            <person name="Han C."/>
            <person name="Kuske C.R."/>
            <person name="Schmutz J."/>
            <person name="Larimer F."/>
            <person name="Land M."/>
            <person name="Hauser L."/>
            <person name="Kyrpides N."/>
            <person name="Mikhailova N."/>
            <person name="Vishnivetskaya T."/>
            <person name="Rodrigues D.F."/>
            <person name="Gilichinsky D."/>
            <person name="Tiedje J."/>
            <person name="Richardson P."/>
        </authorList>
    </citation>
    <scope>NUCLEOTIDE SEQUENCE [LARGE SCALE GENOMIC DNA]</scope>
    <source>
        <strain>DSM 17290 / CCUG 55495 / CIP 109462 / JCM 13490 / 255-15</strain>
    </source>
</reference>
<organism>
    <name type="scientific">Exiguobacterium sibiricum (strain DSM 17290 / CCUG 55495 / CIP 109462 / JCM 13490 / 255-15)</name>
    <dbReference type="NCBI Taxonomy" id="262543"/>
    <lineage>
        <taxon>Bacteria</taxon>
        <taxon>Bacillati</taxon>
        <taxon>Bacillota</taxon>
        <taxon>Bacilli</taxon>
        <taxon>Bacillales</taxon>
        <taxon>Bacillales Family XII. Incertae Sedis</taxon>
        <taxon>Exiguobacterium</taxon>
    </lineage>
</organism>
<protein>
    <recommendedName>
        <fullName evidence="1">Imidazole glycerol phosphate synthase subunit HisF</fullName>
        <ecNumber evidence="1">4.3.2.10</ecNumber>
    </recommendedName>
    <alternativeName>
        <fullName evidence="1">IGP synthase cyclase subunit</fullName>
    </alternativeName>
    <alternativeName>
        <fullName evidence="1">IGP synthase subunit HisF</fullName>
    </alternativeName>
    <alternativeName>
        <fullName evidence="1">ImGP synthase subunit HisF</fullName>
        <shortName evidence="1">IGPS subunit HisF</shortName>
    </alternativeName>
</protein>
<evidence type="ECO:0000255" key="1">
    <source>
        <dbReference type="HAMAP-Rule" id="MF_01013"/>
    </source>
</evidence>